<comment type="function">
    <text evidence="1">Catalyzes the initial step of the lipid cycle reactions in the biosynthesis of the cell wall peptidoglycan: transfers peptidoglycan precursor phospho-MurNAc-pentapeptide from UDP-MurNAc-pentapeptide onto the lipid carrier undecaprenyl phosphate, yielding undecaprenyl-pyrophosphoryl-MurNAc-pentapeptide, known as lipid I.</text>
</comment>
<comment type="catalytic activity">
    <reaction evidence="1">
        <text>UDP-N-acetyl-alpha-D-muramoyl-L-alanyl-gamma-D-glutamyl-meso-2,6-diaminopimeloyl-D-alanyl-D-alanine + di-trans,octa-cis-undecaprenyl phosphate = di-trans,octa-cis-undecaprenyl diphospho-N-acetyl-alpha-D-muramoyl-L-alanyl-D-glutamyl-meso-2,6-diaminopimeloyl-D-alanyl-D-alanine + UMP</text>
        <dbReference type="Rhea" id="RHEA:28386"/>
        <dbReference type="ChEBI" id="CHEBI:57865"/>
        <dbReference type="ChEBI" id="CHEBI:60392"/>
        <dbReference type="ChEBI" id="CHEBI:61386"/>
        <dbReference type="ChEBI" id="CHEBI:61387"/>
        <dbReference type="EC" id="2.7.8.13"/>
    </reaction>
</comment>
<comment type="cofactor">
    <cofactor evidence="1">
        <name>Mg(2+)</name>
        <dbReference type="ChEBI" id="CHEBI:18420"/>
    </cofactor>
</comment>
<comment type="pathway">
    <text evidence="1">Cell wall biogenesis; peptidoglycan biosynthesis.</text>
</comment>
<comment type="subcellular location">
    <subcellularLocation>
        <location evidence="1">Cell membrane</location>
        <topology evidence="1">Multi-pass membrane protein</topology>
    </subcellularLocation>
</comment>
<comment type="similarity">
    <text evidence="1">Belongs to the glycosyltransferase 4 family. MraY subfamily.</text>
</comment>
<sequence length="359" mass="37713">MRQILIAVAVAVTVSILLTPVLIRLFTKQGFGHQIREDGPPSHHTKRGTPSMGGVAILAGIWAGYLGAHLAGLAFDGEGIGASGLLVLGLATALGGVGFIDDLIKIRRSRNLGLNKTAKTVGQITSAVLFGVLVLQFRNAAGLTPGSADLSYVREIATVTLAPVLFVLFCVVIVSAWSNAVNFTDGLDGLAAGTMAMVTAAYVLITFWQYRNACVTAPGLGCYNVRDPLDLALIAAATAGACIGFLWWNAAPAKIFMGDTGSLALGGVIAGLSVTSRTEILAVVLGALFVAEITSVVLQILTFRTTGRRMFRMAPFHHHFELVGWAETTVIIRFWLLTAITCGLGVALFYGEWLAAVGA</sequence>
<name>MRAY_MYCBT</name>
<proteinExistence type="inferred from homology"/>
<protein>
    <recommendedName>
        <fullName evidence="1">Phospho-N-acetylmuramoyl-pentapeptide-transferase</fullName>
        <ecNumber evidence="1">2.7.8.13</ecNumber>
    </recommendedName>
    <alternativeName>
        <fullName evidence="1">UDP-MurNAc-pentapeptide phosphotransferase</fullName>
    </alternativeName>
</protein>
<feature type="chain" id="PRO_1000117187" description="Phospho-N-acetylmuramoyl-pentapeptide-transferase">
    <location>
        <begin position="1"/>
        <end position="359"/>
    </location>
</feature>
<feature type="transmembrane region" description="Helical" evidence="1">
    <location>
        <begin position="3"/>
        <end position="23"/>
    </location>
</feature>
<feature type="transmembrane region" description="Helical" evidence="1">
    <location>
        <begin position="55"/>
        <end position="75"/>
    </location>
</feature>
<feature type="transmembrane region" description="Helical" evidence="1">
    <location>
        <begin position="80"/>
        <end position="100"/>
    </location>
</feature>
<feature type="transmembrane region" description="Helical" evidence="1">
    <location>
        <begin position="117"/>
        <end position="137"/>
    </location>
</feature>
<feature type="transmembrane region" description="Helical" evidence="1">
    <location>
        <begin position="156"/>
        <end position="176"/>
    </location>
</feature>
<feature type="transmembrane region" description="Helical" evidence="1">
    <location>
        <begin position="187"/>
        <end position="207"/>
    </location>
</feature>
<feature type="transmembrane region" description="Helical" evidence="1">
    <location>
        <begin position="231"/>
        <end position="251"/>
    </location>
</feature>
<feature type="transmembrane region" description="Helical" evidence="1">
    <location>
        <begin position="255"/>
        <end position="275"/>
    </location>
</feature>
<feature type="transmembrane region" description="Helical" evidence="1">
    <location>
        <begin position="280"/>
        <end position="300"/>
    </location>
</feature>
<feature type="transmembrane region" description="Helical" evidence="1">
    <location>
        <begin position="334"/>
        <end position="354"/>
    </location>
</feature>
<evidence type="ECO:0000255" key="1">
    <source>
        <dbReference type="HAMAP-Rule" id="MF_00038"/>
    </source>
</evidence>
<reference key="1">
    <citation type="journal article" date="2009" name="Vaccine">
        <title>Whole genome sequence analysis of Mycobacterium bovis bacillus Calmette-Guerin (BCG) Tokyo 172: a comparative study of BCG vaccine substrains.</title>
        <authorList>
            <person name="Seki M."/>
            <person name="Honda I."/>
            <person name="Fujita I."/>
            <person name="Yano I."/>
            <person name="Yamamoto S."/>
            <person name="Koyama A."/>
        </authorList>
    </citation>
    <scope>NUCLEOTIDE SEQUENCE [LARGE SCALE GENOMIC DNA]</scope>
    <source>
        <strain>BCG / Tokyo 172 / ATCC 35737 / TMC 1019</strain>
    </source>
</reference>
<organism>
    <name type="scientific">Mycobacterium bovis (strain BCG / Tokyo 172 / ATCC 35737 / TMC 1019)</name>
    <dbReference type="NCBI Taxonomy" id="561275"/>
    <lineage>
        <taxon>Bacteria</taxon>
        <taxon>Bacillati</taxon>
        <taxon>Actinomycetota</taxon>
        <taxon>Actinomycetes</taxon>
        <taxon>Mycobacteriales</taxon>
        <taxon>Mycobacteriaceae</taxon>
        <taxon>Mycobacterium</taxon>
        <taxon>Mycobacterium tuberculosis complex</taxon>
    </lineage>
</organism>
<accession>C1AQ72</accession>
<gene>
    <name evidence="1" type="primary">mraY</name>
    <name type="ordered locus">JTY_2167</name>
</gene>
<keyword id="KW-0131">Cell cycle</keyword>
<keyword id="KW-0132">Cell division</keyword>
<keyword id="KW-1003">Cell membrane</keyword>
<keyword id="KW-0133">Cell shape</keyword>
<keyword id="KW-0961">Cell wall biogenesis/degradation</keyword>
<keyword id="KW-0460">Magnesium</keyword>
<keyword id="KW-0472">Membrane</keyword>
<keyword id="KW-0479">Metal-binding</keyword>
<keyword id="KW-0573">Peptidoglycan synthesis</keyword>
<keyword id="KW-0808">Transferase</keyword>
<keyword id="KW-0812">Transmembrane</keyword>
<keyword id="KW-1133">Transmembrane helix</keyword>
<dbReference type="EC" id="2.7.8.13" evidence="1"/>
<dbReference type="EMBL" id="AP010918">
    <property type="protein sequence ID" value="BAH26451.1"/>
    <property type="molecule type" value="Genomic_DNA"/>
</dbReference>
<dbReference type="RefSeq" id="WP_003411171.1">
    <property type="nucleotide sequence ID" value="NZ_CP014566.1"/>
</dbReference>
<dbReference type="SMR" id="C1AQ72"/>
<dbReference type="BindingDB" id="C1AQ72"/>
<dbReference type="KEGG" id="mbt:JTY_2167"/>
<dbReference type="HOGENOM" id="CLU_023982_0_1_11"/>
<dbReference type="UniPathway" id="UPA00219"/>
<dbReference type="GO" id="GO:0005886">
    <property type="term" value="C:plasma membrane"/>
    <property type="evidence" value="ECO:0007669"/>
    <property type="project" value="UniProtKB-SubCell"/>
</dbReference>
<dbReference type="GO" id="GO:0046872">
    <property type="term" value="F:metal ion binding"/>
    <property type="evidence" value="ECO:0007669"/>
    <property type="project" value="UniProtKB-KW"/>
</dbReference>
<dbReference type="GO" id="GO:0008963">
    <property type="term" value="F:phospho-N-acetylmuramoyl-pentapeptide-transferase activity"/>
    <property type="evidence" value="ECO:0007669"/>
    <property type="project" value="UniProtKB-UniRule"/>
</dbReference>
<dbReference type="GO" id="GO:0051992">
    <property type="term" value="F:UDP-N-acetylmuramoyl-L-alanyl-D-glutamyl-meso-2,6-diaminopimelyl-D-alanyl-D-alanine:undecaprenyl-phosphate transferase activity"/>
    <property type="evidence" value="ECO:0007669"/>
    <property type="project" value="RHEA"/>
</dbReference>
<dbReference type="GO" id="GO:0051301">
    <property type="term" value="P:cell division"/>
    <property type="evidence" value="ECO:0007669"/>
    <property type="project" value="UniProtKB-KW"/>
</dbReference>
<dbReference type="GO" id="GO:0071555">
    <property type="term" value="P:cell wall organization"/>
    <property type="evidence" value="ECO:0007669"/>
    <property type="project" value="UniProtKB-KW"/>
</dbReference>
<dbReference type="GO" id="GO:0009252">
    <property type="term" value="P:peptidoglycan biosynthetic process"/>
    <property type="evidence" value="ECO:0007669"/>
    <property type="project" value="UniProtKB-UniRule"/>
</dbReference>
<dbReference type="GO" id="GO:0008360">
    <property type="term" value="P:regulation of cell shape"/>
    <property type="evidence" value="ECO:0007669"/>
    <property type="project" value="UniProtKB-KW"/>
</dbReference>
<dbReference type="CDD" id="cd06852">
    <property type="entry name" value="GT_MraY"/>
    <property type="match status" value="1"/>
</dbReference>
<dbReference type="HAMAP" id="MF_00038">
    <property type="entry name" value="MraY"/>
    <property type="match status" value="1"/>
</dbReference>
<dbReference type="InterPro" id="IPR000715">
    <property type="entry name" value="Glycosyl_transferase_4"/>
</dbReference>
<dbReference type="InterPro" id="IPR003524">
    <property type="entry name" value="PNAcMuramoyl-5peptid_Trfase"/>
</dbReference>
<dbReference type="InterPro" id="IPR018480">
    <property type="entry name" value="PNAcMuramoyl-5peptid_Trfase_CS"/>
</dbReference>
<dbReference type="NCBIfam" id="TIGR00445">
    <property type="entry name" value="mraY"/>
    <property type="match status" value="1"/>
</dbReference>
<dbReference type="PANTHER" id="PTHR22926">
    <property type="entry name" value="PHOSPHO-N-ACETYLMURAMOYL-PENTAPEPTIDE-TRANSFERASE"/>
    <property type="match status" value="1"/>
</dbReference>
<dbReference type="PANTHER" id="PTHR22926:SF5">
    <property type="entry name" value="PHOSPHO-N-ACETYLMURAMOYL-PENTAPEPTIDE-TRANSFERASE HOMOLOG"/>
    <property type="match status" value="1"/>
</dbReference>
<dbReference type="Pfam" id="PF00953">
    <property type="entry name" value="Glycos_transf_4"/>
    <property type="match status" value="1"/>
</dbReference>
<dbReference type="Pfam" id="PF10555">
    <property type="entry name" value="MraY_sig1"/>
    <property type="match status" value="1"/>
</dbReference>
<dbReference type="PROSITE" id="PS01347">
    <property type="entry name" value="MRAY_1"/>
    <property type="match status" value="1"/>
</dbReference>
<dbReference type="PROSITE" id="PS01348">
    <property type="entry name" value="MRAY_2"/>
    <property type="match status" value="1"/>
</dbReference>